<keyword id="KW-0007">Acetylation</keyword>
<keyword id="KW-0113">Calvin cycle</keyword>
<keyword id="KW-0120">Carbon dioxide fixation</keyword>
<keyword id="KW-0150">Chloroplast</keyword>
<keyword id="KW-1015">Disulfide bond</keyword>
<keyword id="KW-0456">Lyase</keyword>
<keyword id="KW-0460">Magnesium</keyword>
<keyword id="KW-0479">Metal-binding</keyword>
<keyword id="KW-0488">Methylation</keyword>
<keyword id="KW-0503">Monooxygenase</keyword>
<keyword id="KW-0560">Oxidoreductase</keyword>
<keyword id="KW-0601">Photorespiration</keyword>
<keyword id="KW-0602">Photosynthesis</keyword>
<keyword id="KW-0934">Plastid</keyword>
<protein>
    <recommendedName>
        <fullName evidence="1">Ribulose bisphosphate carboxylase large chain</fullName>
        <shortName evidence="1">RuBisCO large subunit</shortName>
        <ecNumber evidence="1">4.1.1.39</ecNumber>
    </recommendedName>
</protein>
<geneLocation type="chloroplast"/>
<reference key="1">
    <citation type="submission" date="1992-01" db="EMBL/GenBank/DDBJ databases">
        <authorList>
            <person name="Doerksen A.H."/>
            <person name="Strauss S."/>
            <person name="Price R."/>
        </authorList>
    </citation>
    <scope>NUCLEOTIDE SEQUENCE [GENOMIC DNA]</scope>
</reference>
<comment type="function">
    <text evidence="1">RuBisCO catalyzes two reactions: the carboxylation of D-ribulose 1,5-bisphosphate, the primary event in carbon dioxide fixation, as well as the oxidative fragmentation of the pentose substrate in the photorespiration process. Both reactions occur simultaneously and in competition at the same active site.</text>
</comment>
<comment type="catalytic activity">
    <reaction evidence="1">
        <text>2 (2R)-3-phosphoglycerate + 2 H(+) = D-ribulose 1,5-bisphosphate + CO2 + H2O</text>
        <dbReference type="Rhea" id="RHEA:23124"/>
        <dbReference type="ChEBI" id="CHEBI:15377"/>
        <dbReference type="ChEBI" id="CHEBI:15378"/>
        <dbReference type="ChEBI" id="CHEBI:16526"/>
        <dbReference type="ChEBI" id="CHEBI:57870"/>
        <dbReference type="ChEBI" id="CHEBI:58272"/>
        <dbReference type="EC" id="4.1.1.39"/>
    </reaction>
</comment>
<comment type="catalytic activity">
    <reaction evidence="1">
        <text>D-ribulose 1,5-bisphosphate + O2 = 2-phosphoglycolate + (2R)-3-phosphoglycerate + 2 H(+)</text>
        <dbReference type="Rhea" id="RHEA:36631"/>
        <dbReference type="ChEBI" id="CHEBI:15378"/>
        <dbReference type="ChEBI" id="CHEBI:15379"/>
        <dbReference type="ChEBI" id="CHEBI:57870"/>
        <dbReference type="ChEBI" id="CHEBI:58033"/>
        <dbReference type="ChEBI" id="CHEBI:58272"/>
    </reaction>
</comment>
<comment type="cofactor">
    <cofactor evidence="1">
        <name>Mg(2+)</name>
        <dbReference type="ChEBI" id="CHEBI:18420"/>
    </cofactor>
    <text evidence="1">Binds 1 Mg(2+) ion per subunit.</text>
</comment>
<comment type="subunit">
    <text evidence="1">Heterohexadecamer of 8 large chains and 8 small chains; disulfide-linked. The disulfide link is formed within the large subunit homodimers.</text>
</comment>
<comment type="subcellular location">
    <subcellularLocation>
        <location>Plastid</location>
        <location>Chloroplast</location>
    </subcellularLocation>
</comment>
<comment type="PTM">
    <text evidence="1">The disulfide bond which can form in the large chain dimeric partners within the hexadecamer appears to be associated with oxidative stress and protein turnover.</text>
</comment>
<comment type="miscellaneous">
    <text evidence="1">The basic functional RuBisCO is composed of a large chain homodimer in a 'head-to-tail' conformation. In form I RuBisCO this homodimer is arranged in a barrel-like tetramer with the small subunits forming a tetrameric 'cap' on each end of the 'barrel'.</text>
</comment>
<comment type="similarity">
    <text evidence="1">Belongs to the RuBisCO large chain family. Type I subfamily.</text>
</comment>
<gene>
    <name evidence="1" type="primary">rbcL</name>
</gene>
<evidence type="ECO:0000255" key="1">
    <source>
        <dbReference type="HAMAP-Rule" id="MF_01338"/>
    </source>
</evidence>
<dbReference type="EC" id="4.1.1.39" evidence="1"/>
<dbReference type="EMBL" id="X63662">
    <property type="protein sequence ID" value="CAA45202.1"/>
    <property type="molecule type" value="Genomic_DNA"/>
</dbReference>
<dbReference type="PIR" id="S19215">
    <property type="entry name" value="RKKHLC"/>
</dbReference>
<dbReference type="RefSeq" id="YP_003934193.1">
    <property type="nucleotide sequence ID" value="NC_014575.1"/>
</dbReference>
<dbReference type="SMR" id="P26959"/>
<dbReference type="GeneID" id="9845472"/>
<dbReference type="GO" id="GO:0009507">
    <property type="term" value="C:chloroplast"/>
    <property type="evidence" value="ECO:0007669"/>
    <property type="project" value="UniProtKB-SubCell"/>
</dbReference>
<dbReference type="GO" id="GO:0000287">
    <property type="term" value="F:magnesium ion binding"/>
    <property type="evidence" value="ECO:0007669"/>
    <property type="project" value="UniProtKB-UniRule"/>
</dbReference>
<dbReference type="GO" id="GO:0004497">
    <property type="term" value="F:monooxygenase activity"/>
    <property type="evidence" value="ECO:0007669"/>
    <property type="project" value="UniProtKB-KW"/>
</dbReference>
<dbReference type="GO" id="GO:0016984">
    <property type="term" value="F:ribulose-bisphosphate carboxylase activity"/>
    <property type="evidence" value="ECO:0007669"/>
    <property type="project" value="UniProtKB-UniRule"/>
</dbReference>
<dbReference type="GO" id="GO:0009853">
    <property type="term" value="P:photorespiration"/>
    <property type="evidence" value="ECO:0007669"/>
    <property type="project" value="UniProtKB-KW"/>
</dbReference>
<dbReference type="GO" id="GO:0019253">
    <property type="term" value="P:reductive pentose-phosphate cycle"/>
    <property type="evidence" value="ECO:0007669"/>
    <property type="project" value="UniProtKB-UniRule"/>
</dbReference>
<dbReference type="CDD" id="cd08212">
    <property type="entry name" value="RuBisCO_large_I"/>
    <property type="match status" value="1"/>
</dbReference>
<dbReference type="FunFam" id="3.20.20.110:FF:000001">
    <property type="entry name" value="Ribulose bisphosphate carboxylase large chain"/>
    <property type="match status" value="1"/>
</dbReference>
<dbReference type="FunFam" id="3.30.70.150:FF:000001">
    <property type="entry name" value="Ribulose bisphosphate carboxylase large chain"/>
    <property type="match status" value="1"/>
</dbReference>
<dbReference type="Gene3D" id="3.20.20.110">
    <property type="entry name" value="Ribulose bisphosphate carboxylase, large subunit, C-terminal domain"/>
    <property type="match status" value="1"/>
</dbReference>
<dbReference type="Gene3D" id="3.30.70.150">
    <property type="entry name" value="RuBisCO large subunit, N-terminal domain"/>
    <property type="match status" value="1"/>
</dbReference>
<dbReference type="HAMAP" id="MF_01338">
    <property type="entry name" value="RuBisCO_L_type1"/>
    <property type="match status" value="1"/>
</dbReference>
<dbReference type="InterPro" id="IPR033966">
    <property type="entry name" value="RuBisCO"/>
</dbReference>
<dbReference type="InterPro" id="IPR020878">
    <property type="entry name" value="RuBisCo_large_chain_AS"/>
</dbReference>
<dbReference type="InterPro" id="IPR000685">
    <property type="entry name" value="RuBisCO_lsu_C"/>
</dbReference>
<dbReference type="InterPro" id="IPR036376">
    <property type="entry name" value="RuBisCO_lsu_C_sf"/>
</dbReference>
<dbReference type="InterPro" id="IPR017443">
    <property type="entry name" value="RuBisCO_lsu_fd_N"/>
</dbReference>
<dbReference type="InterPro" id="IPR036422">
    <property type="entry name" value="RuBisCO_lsu_N_sf"/>
</dbReference>
<dbReference type="InterPro" id="IPR020888">
    <property type="entry name" value="RuBisCO_lsuI"/>
</dbReference>
<dbReference type="NCBIfam" id="NF003252">
    <property type="entry name" value="PRK04208.1"/>
    <property type="match status" value="1"/>
</dbReference>
<dbReference type="PANTHER" id="PTHR42704">
    <property type="entry name" value="RIBULOSE BISPHOSPHATE CARBOXYLASE"/>
    <property type="match status" value="1"/>
</dbReference>
<dbReference type="PANTHER" id="PTHR42704:SF15">
    <property type="entry name" value="RIBULOSE BISPHOSPHATE CARBOXYLASE LARGE CHAIN"/>
    <property type="match status" value="1"/>
</dbReference>
<dbReference type="Pfam" id="PF00016">
    <property type="entry name" value="RuBisCO_large"/>
    <property type="match status" value="1"/>
</dbReference>
<dbReference type="Pfam" id="PF02788">
    <property type="entry name" value="RuBisCO_large_N"/>
    <property type="match status" value="1"/>
</dbReference>
<dbReference type="SFLD" id="SFLDG01052">
    <property type="entry name" value="RuBisCO"/>
    <property type="match status" value="1"/>
</dbReference>
<dbReference type="SFLD" id="SFLDS00014">
    <property type="entry name" value="RuBisCO"/>
    <property type="match status" value="1"/>
</dbReference>
<dbReference type="SFLD" id="SFLDG00301">
    <property type="entry name" value="RuBisCO-like_proteins"/>
    <property type="match status" value="1"/>
</dbReference>
<dbReference type="SUPFAM" id="SSF51649">
    <property type="entry name" value="RuBisCo, C-terminal domain"/>
    <property type="match status" value="1"/>
</dbReference>
<dbReference type="SUPFAM" id="SSF54966">
    <property type="entry name" value="RuBisCO, large subunit, small (N-terminal) domain"/>
    <property type="match status" value="1"/>
</dbReference>
<dbReference type="PROSITE" id="PS00157">
    <property type="entry name" value="RUBISCO_LARGE"/>
    <property type="match status" value="1"/>
</dbReference>
<proteinExistence type="inferred from homology"/>
<name>RBL_CEDDE</name>
<feature type="propeptide" id="PRO_0000031165" evidence="1">
    <location>
        <begin position="1"/>
        <end position="2"/>
    </location>
</feature>
<feature type="chain" id="PRO_0000031166" description="Ribulose bisphosphate carboxylase large chain">
    <location>
        <begin position="3"/>
        <end position="475"/>
    </location>
</feature>
<feature type="active site" description="Proton acceptor" evidence="1">
    <location>
        <position position="175"/>
    </location>
</feature>
<feature type="active site" description="Proton acceptor" evidence="1">
    <location>
        <position position="294"/>
    </location>
</feature>
<feature type="binding site" description="in homodimeric partner" evidence="1">
    <location>
        <position position="123"/>
    </location>
    <ligand>
        <name>substrate</name>
    </ligand>
</feature>
<feature type="binding site" evidence="1">
    <location>
        <position position="173"/>
    </location>
    <ligand>
        <name>substrate</name>
    </ligand>
</feature>
<feature type="binding site" evidence="1">
    <location>
        <position position="177"/>
    </location>
    <ligand>
        <name>substrate</name>
    </ligand>
</feature>
<feature type="binding site" description="via carbamate group" evidence="1">
    <location>
        <position position="201"/>
    </location>
    <ligand>
        <name>Mg(2+)</name>
        <dbReference type="ChEBI" id="CHEBI:18420"/>
    </ligand>
</feature>
<feature type="binding site" evidence="1">
    <location>
        <position position="203"/>
    </location>
    <ligand>
        <name>Mg(2+)</name>
        <dbReference type="ChEBI" id="CHEBI:18420"/>
    </ligand>
</feature>
<feature type="binding site" evidence="1">
    <location>
        <position position="204"/>
    </location>
    <ligand>
        <name>Mg(2+)</name>
        <dbReference type="ChEBI" id="CHEBI:18420"/>
    </ligand>
</feature>
<feature type="binding site" evidence="1">
    <location>
        <position position="295"/>
    </location>
    <ligand>
        <name>substrate</name>
    </ligand>
</feature>
<feature type="binding site" evidence="1">
    <location>
        <position position="327"/>
    </location>
    <ligand>
        <name>substrate</name>
    </ligand>
</feature>
<feature type="binding site" evidence="1">
    <location>
        <position position="379"/>
    </location>
    <ligand>
        <name>substrate</name>
    </ligand>
</feature>
<feature type="site" description="Transition state stabilizer" evidence="1">
    <location>
        <position position="334"/>
    </location>
</feature>
<feature type="modified residue" description="N-acetylproline" evidence="1">
    <location>
        <position position="3"/>
    </location>
</feature>
<feature type="modified residue" description="N6,N6,N6-trimethyllysine" evidence="1">
    <location>
        <position position="14"/>
    </location>
</feature>
<feature type="modified residue" description="N6-carboxylysine" evidence="1">
    <location>
        <position position="201"/>
    </location>
</feature>
<feature type="disulfide bond" description="Interchain; in linked form" evidence="1">
    <location>
        <position position="247"/>
    </location>
</feature>
<accession>P26959</accession>
<sequence length="475" mass="52659">MSPKTETKASVGFKAGVKDYRLTYYTPEYQTKDTDILAAFRVTPQPGVPPEEAGAAVAAESSTGTWTTVWTDGLTSLDRYKGRCYDIEPVPGEESQFIAYVAYPLDLFEEGSVTNLFTSIVGNVFGFKALRALRLEDLRIPPAYSKTFQGPPHGIQVERDKLNKYGRPLLGCTIKPKLGLSAKNYGRAVYECLRGGLDFTKDDENVNSQPFMRWRDRFVFCAEAIYKAQAETGEIKGHYLNATAGTCEEMMKRAVFARELGVPIVMHDYLTGGFTANTSLAHYCRDNGLLLHIHRAMHAVIDRQRIHGMHFRVLAKALRMSGGDHIHAGTVVGKLEGERDVTLGFVDLLRDDFIEKDRSRGIYFTQDWVSMPGVLPVASGGIHVWHMPALTEIFGDDSVLQFGGGTLGHPWGNAPGAVANRVALEACVQARNEGRDLAREGNEVIREASKWSPELAAACEVWKEIKFEFEAIDVL</sequence>
<organism>
    <name type="scientific">Cedrus deodara</name>
    <name type="common">Deodar cedar</name>
    <name type="synonym">Pinus deodara</name>
    <dbReference type="NCBI Taxonomy" id="3322"/>
    <lineage>
        <taxon>Eukaryota</taxon>
        <taxon>Viridiplantae</taxon>
        <taxon>Streptophyta</taxon>
        <taxon>Embryophyta</taxon>
        <taxon>Tracheophyta</taxon>
        <taxon>Spermatophyta</taxon>
        <taxon>Pinopsida</taxon>
        <taxon>Pinidae</taxon>
        <taxon>Conifers I</taxon>
        <taxon>Pinales</taxon>
        <taxon>Pinaceae</taxon>
        <taxon>Cedrus</taxon>
    </lineage>
</organism>